<protein>
    <recommendedName>
        <fullName evidence="1">ATP synthase subunit c</fullName>
    </recommendedName>
    <alternativeName>
        <fullName evidence="1">ATP synthase F(0) sector subunit c</fullName>
    </alternativeName>
    <alternativeName>
        <fullName evidence="1">F-type ATPase subunit c</fullName>
        <shortName evidence="1">F-ATPase subunit c</shortName>
    </alternativeName>
    <alternativeName>
        <fullName evidence="1">Lipid-binding protein</fullName>
    </alternativeName>
</protein>
<reference key="1">
    <citation type="submission" date="2008-04" db="EMBL/GenBank/DDBJ databases">
        <title>Complete sequence of chromosome of Natranaerobius thermophilus JW/NM-WN-LF.</title>
        <authorList>
            <consortium name="US DOE Joint Genome Institute"/>
            <person name="Copeland A."/>
            <person name="Lucas S."/>
            <person name="Lapidus A."/>
            <person name="Glavina del Rio T."/>
            <person name="Dalin E."/>
            <person name="Tice H."/>
            <person name="Bruce D."/>
            <person name="Goodwin L."/>
            <person name="Pitluck S."/>
            <person name="Chertkov O."/>
            <person name="Brettin T."/>
            <person name="Detter J.C."/>
            <person name="Han C."/>
            <person name="Kuske C.R."/>
            <person name="Schmutz J."/>
            <person name="Larimer F."/>
            <person name="Land M."/>
            <person name="Hauser L."/>
            <person name="Kyrpides N."/>
            <person name="Lykidis A."/>
            <person name="Mesbah N.M."/>
            <person name="Wiegel J."/>
        </authorList>
    </citation>
    <scope>NUCLEOTIDE SEQUENCE [LARGE SCALE GENOMIC DNA]</scope>
    <source>
        <strain>ATCC BAA-1301 / DSM 18059 / JW/NM-WN-LF</strain>
    </source>
</reference>
<name>ATPL_NATTJ</name>
<organism>
    <name type="scientific">Natranaerobius thermophilus (strain ATCC BAA-1301 / DSM 18059 / JW/NM-WN-LF)</name>
    <dbReference type="NCBI Taxonomy" id="457570"/>
    <lineage>
        <taxon>Bacteria</taxon>
        <taxon>Bacillati</taxon>
        <taxon>Bacillota</taxon>
        <taxon>Clostridia</taxon>
        <taxon>Natranaerobiales</taxon>
        <taxon>Natranaerobiaceae</taxon>
        <taxon>Natranaerobius</taxon>
    </lineage>
</organism>
<dbReference type="EMBL" id="CP001034">
    <property type="protein sequence ID" value="ACB86396.1"/>
    <property type="molecule type" value="Genomic_DNA"/>
</dbReference>
<dbReference type="RefSeq" id="WP_012449228.1">
    <property type="nucleotide sequence ID" value="NC_010718.1"/>
</dbReference>
<dbReference type="SMR" id="B2A3G7"/>
<dbReference type="FunCoup" id="B2A3G7">
    <property type="interactions" value="335"/>
</dbReference>
<dbReference type="STRING" id="457570.Nther_2849"/>
<dbReference type="KEGG" id="nth:Nther_2849"/>
<dbReference type="eggNOG" id="COG0636">
    <property type="taxonomic scope" value="Bacteria"/>
</dbReference>
<dbReference type="HOGENOM" id="CLU_148047_2_1_9"/>
<dbReference type="InParanoid" id="B2A3G7"/>
<dbReference type="OrthoDB" id="9810379at2"/>
<dbReference type="Proteomes" id="UP000001683">
    <property type="component" value="Chromosome"/>
</dbReference>
<dbReference type="GO" id="GO:0005886">
    <property type="term" value="C:plasma membrane"/>
    <property type="evidence" value="ECO:0007669"/>
    <property type="project" value="UniProtKB-SubCell"/>
</dbReference>
<dbReference type="GO" id="GO:0045259">
    <property type="term" value="C:proton-transporting ATP synthase complex"/>
    <property type="evidence" value="ECO:0007669"/>
    <property type="project" value="UniProtKB-KW"/>
</dbReference>
<dbReference type="GO" id="GO:0033177">
    <property type="term" value="C:proton-transporting two-sector ATPase complex, proton-transporting domain"/>
    <property type="evidence" value="ECO:0007669"/>
    <property type="project" value="InterPro"/>
</dbReference>
<dbReference type="GO" id="GO:0008289">
    <property type="term" value="F:lipid binding"/>
    <property type="evidence" value="ECO:0007669"/>
    <property type="project" value="UniProtKB-KW"/>
</dbReference>
<dbReference type="GO" id="GO:0046933">
    <property type="term" value="F:proton-transporting ATP synthase activity, rotational mechanism"/>
    <property type="evidence" value="ECO:0007669"/>
    <property type="project" value="UniProtKB-UniRule"/>
</dbReference>
<dbReference type="CDD" id="cd18184">
    <property type="entry name" value="ATP-synt_Fo_c_NaATPase"/>
    <property type="match status" value="1"/>
</dbReference>
<dbReference type="FunFam" id="1.20.20.10:FF:000002">
    <property type="entry name" value="ATP synthase subunit c"/>
    <property type="match status" value="1"/>
</dbReference>
<dbReference type="Gene3D" id="1.20.120.610">
    <property type="entry name" value="lithium bound rotor ring of v- atpase"/>
    <property type="match status" value="1"/>
</dbReference>
<dbReference type="HAMAP" id="MF_01396">
    <property type="entry name" value="ATP_synth_c_bact"/>
    <property type="match status" value="1"/>
</dbReference>
<dbReference type="InterPro" id="IPR005953">
    <property type="entry name" value="ATP_synth_csu_bac/chlpt"/>
</dbReference>
<dbReference type="InterPro" id="IPR000454">
    <property type="entry name" value="ATP_synth_F0_csu"/>
</dbReference>
<dbReference type="InterPro" id="IPR020537">
    <property type="entry name" value="ATP_synth_F0_csu_DDCD_BS"/>
</dbReference>
<dbReference type="InterPro" id="IPR002379">
    <property type="entry name" value="ATPase_proteolipid_c-like_dom"/>
</dbReference>
<dbReference type="InterPro" id="IPR035921">
    <property type="entry name" value="F/V-ATP_Csub_sf"/>
</dbReference>
<dbReference type="NCBIfam" id="TIGR01260">
    <property type="entry name" value="ATP_synt_c"/>
    <property type="match status" value="1"/>
</dbReference>
<dbReference type="PANTHER" id="PTHR10031">
    <property type="entry name" value="ATP SYNTHASE LIPID-BINDING PROTEIN, MITOCHONDRIAL"/>
    <property type="match status" value="1"/>
</dbReference>
<dbReference type="PANTHER" id="PTHR10031:SF0">
    <property type="entry name" value="ATPASE PROTEIN 9"/>
    <property type="match status" value="1"/>
</dbReference>
<dbReference type="Pfam" id="PF00137">
    <property type="entry name" value="ATP-synt_C"/>
    <property type="match status" value="1"/>
</dbReference>
<dbReference type="PRINTS" id="PR00124">
    <property type="entry name" value="ATPASEC"/>
</dbReference>
<dbReference type="SUPFAM" id="SSF81333">
    <property type="entry name" value="F1F0 ATP synthase subunit C"/>
    <property type="match status" value="1"/>
</dbReference>
<dbReference type="PROSITE" id="PS00605">
    <property type="entry name" value="ATPASE_C"/>
    <property type="match status" value="1"/>
</dbReference>
<comment type="function">
    <text evidence="1">F(1)F(0) ATP synthase produces ATP from ADP in the presence of a proton or sodium gradient. F-type ATPases consist of two structural domains, F(1) containing the extramembraneous catalytic core and F(0) containing the membrane proton channel, linked together by a central stalk and a peripheral stalk. During catalysis, ATP synthesis in the catalytic domain of F(1) is coupled via a rotary mechanism of the central stalk subunits to proton translocation.</text>
</comment>
<comment type="function">
    <text evidence="1">Key component of the F(0) channel; it plays a direct role in translocation across the membrane. A homomeric c-ring of between 10-14 subunits forms the central stalk rotor element with the F(1) delta and epsilon subunits.</text>
</comment>
<comment type="subunit">
    <text evidence="1">F-type ATPases have 2 components, F(1) - the catalytic core - and F(0) - the membrane proton channel. F(1) has five subunits: alpha(3), beta(3), gamma(1), delta(1), epsilon(1). F(0) has three main subunits: a(1), b(2) and c(10-14). The alpha and beta chains form an alternating ring which encloses part of the gamma chain. F(1) is attached to F(0) by a central stalk formed by the gamma and epsilon chains, while a peripheral stalk is formed by the delta and b chains.</text>
</comment>
<comment type="subcellular location">
    <subcellularLocation>
        <location evidence="1">Cell membrane</location>
        <topology evidence="1">Multi-pass membrane protein</topology>
    </subcellularLocation>
</comment>
<comment type="similarity">
    <text evidence="1">Belongs to the ATPase C chain family.</text>
</comment>
<keyword id="KW-0066">ATP synthesis</keyword>
<keyword id="KW-1003">Cell membrane</keyword>
<keyword id="KW-0138">CF(0)</keyword>
<keyword id="KW-0375">Hydrogen ion transport</keyword>
<keyword id="KW-0406">Ion transport</keyword>
<keyword id="KW-0446">Lipid-binding</keyword>
<keyword id="KW-0472">Membrane</keyword>
<keyword id="KW-1185">Reference proteome</keyword>
<keyword id="KW-0812">Transmembrane</keyword>
<keyword id="KW-1133">Transmembrane helix</keyword>
<keyword id="KW-0813">Transport</keyword>
<sequence length="86" mass="8380">MIDGQSLVLAASAIGAGLAMIAGIGAGIGQGFAAGKGAESVGRQPDAQGDIIRTMLLGAAVAETTGIYALVIALLLLFANPLIGML</sequence>
<feature type="chain" id="PRO_5000336539" description="ATP synthase subunit c">
    <location>
        <begin position="1"/>
        <end position="86"/>
    </location>
</feature>
<feature type="transmembrane region" description="Helical" evidence="1">
    <location>
        <begin position="8"/>
        <end position="28"/>
    </location>
</feature>
<feature type="transmembrane region" description="Helical" evidence="1">
    <location>
        <begin position="66"/>
        <end position="86"/>
    </location>
</feature>
<feature type="site" description="Reversibly protonated during proton transport" evidence="1">
    <location>
        <position position="63"/>
    </location>
</feature>
<proteinExistence type="inferred from homology"/>
<accession>B2A3G7</accession>
<evidence type="ECO:0000255" key="1">
    <source>
        <dbReference type="HAMAP-Rule" id="MF_01396"/>
    </source>
</evidence>
<gene>
    <name evidence="1" type="primary">atpE</name>
    <name type="ordered locus">Nther_2849</name>
</gene>